<feature type="chain" id="PRO_1000064963" description="5'-deoxynucleotidase YPA_2050">
    <location>
        <begin position="1"/>
        <end position="197"/>
    </location>
</feature>
<feature type="domain" description="HD" evidence="2">
    <location>
        <begin position="28"/>
        <end position="140"/>
    </location>
</feature>
<feature type="binding site" evidence="1">
    <location>
        <begin position="16"/>
        <end position="17"/>
    </location>
    <ligand>
        <name>substrate</name>
    </ligand>
</feature>
<feature type="binding site" evidence="1">
    <location>
        <position position="31"/>
    </location>
    <ligand>
        <name>a divalent metal cation</name>
        <dbReference type="ChEBI" id="CHEBI:60240"/>
    </ligand>
</feature>
<feature type="binding site" evidence="1">
    <location>
        <position position="31"/>
    </location>
    <ligand>
        <name>substrate</name>
    </ligand>
</feature>
<feature type="binding site" evidence="1">
    <location>
        <position position="66"/>
    </location>
    <ligand>
        <name>a divalent metal cation</name>
        <dbReference type="ChEBI" id="CHEBI:60240"/>
    </ligand>
</feature>
<feature type="binding site" evidence="1">
    <location>
        <position position="67"/>
    </location>
    <ligand>
        <name>a divalent metal cation</name>
        <dbReference type="ChEBI" id="CHEBI:60240"/>
    </ligand>
</feature>
<feature type="binding site" evidence="1">
    <location>
        <position position="67"/>
    </location>
    <ligand>
        <name>substrate</name>
    </ligand>
</feature>
<feature type="binding site" evidence="1">
    <location>
        <begin position="75"/>
        <end position="78"/>
    </location>
    <ligand>
        <name>substrate</name>
    </ligand>
</feature>
<feature type="binding site" evidence="1">
    <location>
        <position position="135"/>
    </location>
    <ligand>
        <name>a divalent metal cation</name>
        <dbReference type="ChEBI" id="CHEBI:60240"/>
    </ligand>
</feature>
<feature type="binding site" evidence="1">
    <location>
        <position position="135"/>
    </location>
    <ligand>
        <name>substrate</name>
    </ligand>
</feature>
<feature type="site" description="Appears to be important in orienting the phosphate for catalysis" evidence="1">
    <location>
        <position position="16"/>
    </location>
</feature>
<sequence>MSHFFAHLSRLKLINRWPLMRNVRTENVSEHSLQVAFVAHALAIIKNRKFNGNLNAERIALLAMYHDASEVITGDLPTPIKYHNPKIAHEYKKIEKVAQQKLIEMLPKELQHDFRCLLDEHYYSEEEKALVKQADALCAYLKCLEELSAGNNEFIQAKARLEKTLAIRQSPEMDYFMAVFVPSFSLSLDEISLDSLD</sequence>
<proteinExistence type="inferred from homology"/>
<name>5DNU_YERPA</name>
<protein>
    <recommendedName>
        <fullName evidence="1">5'-deoxynucleotidase YPA_2050</fullName>
        <ecNumber evidence="1">3.1.3.89</ecNumber>
    </recommendedName>
    <alternativeName>
        <fullName evidence="1">5'-deoxyribonucleotidase</fullName>
    </alternativeName>
    <alternativeName>
        <fullName evidence="1">Nucleoside 5'-monophosphate phosphohydrolase</fullName>
    </alternativeName>
</protein>
<comment type="function">
    <text evidence="1">Catalyzes the strictly specific dephosphorylation of 2'-deoxyribonucleoside 5'-monophosphates.</text>
</comment>
<comment type="catalytic activity">
    <reaction evidence="1">
        <text>a 2'-deoxyribonucleoside 5'-phosphate + H2O = a 2'-deoxyribonucleoside + phosphate</text>
        <dbReference type="Rhea" id="RHEA:36167"/>
        <dbReference type="ChEBI" id="CHEBI:15377"/>
        <dbReference type="ChEBI" id="CHEBI:18274"/>
        <dbReference type="ChEBI" id="CHEBI:43474"/>
        <dbReference type="ChEBI" id="CHEBI:65317"/>
        <dbReference type="EC" id="3.1.3.89"/>
    </reaction>
</comment>
<comment type="cofactor">
    <cofactor evidence="1">
        <name>a divalent metal cation</name>
        <dbReference type="ChEBI" id="CHEBI:60240"/>
    </cofactor>
</comment>
<comment type="subunit">
    <text evidence="1">Homodimer.</text>
</comment>
<comment type="subcellular location">
    <subcellularLocation>
        <location evidence="1">Cytoplasm</location>
    </subcellularLocation>
</comment>
<comment type="similarity">
    <text evidence="1">Belongs to the 5DNU family.</text>
</comment>
<dbReference type="EC" id="3.1.3.89" evidence="1"/>
<dbReference type="EMBL" id="CP000308">
    <property type="protein sequence ID" value="ABG14016.1"/>
    <property type="molecule type" value="Genomic_DNA"/>
</dbReference>
<dbReference type="SMR" id="Q1C6A6"/>
<dbReference type="KEGG" id="ypa:YPA_2050"/>
<dbReference type="Proteomes" id="UP000001971">
    <property type="component" value="Chromosome"/>
</dbReference>
<dbReference type="GO" id="GO:0005737">
    <property type="term" value="C:cytoplasm"/>
    <property type="evidence" value="ECO:0007669"/>
    <property type="project" value="UniProtKB-SubCell"/>
</dbReference>
<dbReference type="GO" id="GO:0002953">
    <property type="term" value="F:5'-deoxynucleotidase activity"/>
    <property type="evidence" value="ECO:0007669"/>
    <property type="project" value="UniProtKB-EC"/>
</dbReference>
<dbReference type="GO" id="GO:0046872">
    <property type="term" value="F:metal ion binding"/>
    <property type="evidence" value="ECO:0007669"/>
    <property type="project" value="UniProtKB-KW"/>
</dbReference>
<dbReference type="GO" id="GO:0000166">
    <property type="term" value="F:nucleotide binding"/>
    <property type="evidence" value="ECO:0007669"/>
    <property type="project" value="UniProtKB-KW"/>
</dbReference>
<dbReference type="FunFam" id="1.10.3210.10:FF:000002">
    <property type="entry name" value="Nucleotidase YfbR"/>
    <property type="match status" value="1"/>
</dbReference>
<dbReference type="Gene3D" id="1.10.3210.10">
    <property type="entry name" value="Hypothetical protein af1432"/>
    <property type="match status" value="1"/>
</dbReference>
<dbReference type="HAMAP" id="MF_01100">
    <property type="entry name" value="5DNU"/>
    <property type="match status" value="1"/>
</dbReference>
<dbReference type="InterPro" id="IPR003607">
    <property type="entry name" value="HD/PDEase_dom"/>
</dbReference>
<dbReference type="InterPro" id="IPR006674">
    <property type="entry name" value="HD_domain"/>
</dbReference>
<dbReference type="InterPro" id="IPR022971">
    <property type="entry name" value="YfbR"/>
</dbReference>
<dbReference type="InterPro" id="IPR039356">
    <property type="entry name" value="YfbR/HDDC2"/>
</dbReference>
<dbReference type="NCBIfam" id="NF003009">
    <property type="entry name" value="PRK03826.1"/>
    <property type="match status" value="1"/>
</dbReference>
<dbReference type="PANTHER" id="PTHR11845">
    <property type="entry name" value="5'-DEOXYNUCLEOTIDASE HDDC2"/>
    <property type="match status" value="1"/>
</dbReference>
<dbReference type="PANTHER" id="PTHR11845:SF13">
    <property type="entry name" value="5'-DEOXYNUCLEOTIDASE HDDC2"/>
    <property type="match status" value="1"/>
</dbReference>
<dbReference type="Pfam" id="PF12917">
    <property type="entry name" value="YfbR-like"/>
    <property type="match status" value="1"/>
</dbReference>
<dbReference type="SMART" id="SM00471">
    <property type="entry name" value="HDc"/>
    <property type="match status" value="1"/>
</dbReference>
<dbReference type="SUPFAM" id="SSF109604">
    <property type="entry name" value="HD-domain/PDEase-like"/>
    <property type="match status" value="1"/>
</dbReference>
<dbReference type="PROSITE" id="PS51831">
    <property type="entry name" value="HD"/>
    <property type="match status" value="1"/>
</dbReference>
<gene>
    <name type="ordered locus">YPA_2050</name>
</gene>
<organism>
    <name type="scientific">Yersinia pestis bv. Antiqua (strain Antiqua)</name>
    <dbReference type="NCBI Taxonomy" id="360102"/>
    <lineage>
        <taxon>Bacteria</taxon>
        <taxon>Pseudomonadati</taxon>
        <taxon>Pseudomonadota</taxon>
        <taxon>Gammaproteobacteria</taxon>
        <taxon>Enterobacterales</taxon>
        <taxon>Yersiniaceae</taxon>
        <taxon>Yersinia</taxon>
    </lineage>
</organism>
<reference key="1">
    <citation type="journal article" date="2006" name="J. Bacteriol.">
        <title>Complete genome sequence of Yersinia pestis strains Antiqua and Nepal516: evidence of gene reduction in an emerging pathogen.</title>
        <authorList>
            <person name="Chain P.S.G."/>
            <person name="Hu P."/>
            <person name="Malfatti S.A."/>
            <person name="Radnedge L."/>
            <person name="Larimer F."/>
            <person name="Vergez L.M."/>
            <person name="Worsham P."/>
            <person name="Chu M.C."/>
            <person name="Andersen G.L."/>
        </authorList>
    </citation>
    <scope>NUCLEOTIDE SEQUENCE [LARGE SCALE GENOMIC DNA]</scope>
    <source>
        <strain>Antiqua</strain>
    </source>
</reference>
<evidence type="ECO:0000255" key="1">
    <source>
        <dbReference type="HAMAP-Rule" id="MF_01100"/>
    </source>
</evidence>
<evidence type="ECO:0000255" key="2">
    <source>
        <dbReference type="PROSITE-ProRule" id="PRU01175"/>
    </source>
</evidence>
<accession>Q1C6A6</accession>
<keyword id="KW-0963">Cytoplasm</keyword>
<keyword id="KW-0378">Hydrolase</keyword>
<keyword id="KW-0479">Metal-binding</keyword>
<keyword id="KW-0547">Nucleotide-binding</keyword>